<organism>
    <name type="scientific">Tabanus yao</name>
    <name type="common">Horsefly</name>
    <dbReference type="NCBI Taxonomy" id="485572"/>
    <lineage>
        <taxon>Eukaryota</taxon>
        <taxon>Metazoa</taxon>
        <taxon>Ecdysozoa</taxon>
        <taxon>Arthropoda</taxon>
        <taxon>Hexapoda</taxon>
        <taxon>Insecta</taxon>
        <taxon>Pterygota</taxon>
        <taxon>Neoptera</taxon>
        <taxon>Endopterygota</taxon>
        <taxon>Diptera</taxon>
        <taxon>Brachycera</taxon>
        <taxon>Tabanomorpha</taxon>
        <taxon>Tabanoidea</taxon>
        <taxon>Tabanidae</taxon>
        <taxon>Tabanus</taxon>
    </lineage>
</organism>
<keyword id="KW-1217">Cell adhesion impairing toxin</keyword>
<keyword id="KW-0903">Direct protein sequencing</keyword>
<keyword id="KW-1199">Hemostasis impairing toxin</keyword>
<keyword id="KW-1201">Platelet aggregation inhibiting toxin</keyword>
<keyword id="KW-0964">Secreted</keyword>
<keyword id="KW-0732">Signal</keyword>
<keyword id="KW-0800">Toxin</keyword>
<accession>C8YJA1</accession>
<dbReference type="EMBL" id="FJ469608">
    <property type="protein sequence ID" value="ACS72296.1"/>
    <property type="molecule type" value="mRNA"/>
</dbReference>
<dbReference type="SMR" id="C8YJA1"/>
<dbReference type="GO" id="GO:0005576">
    <property type="term" value="C:extracellular region"/>
    <property type="evidence" value="ECO:0007669"/>
    <property type="project" value="UniProtKB-SubCell"/>
</dbReference>
<dbReference type="GO" id="GO:0090729">
    <property type="term" value="F:toxin activity"/>
    <property type="evidence" value="ECO:0007669"/>
    <property type="project" value="UniProtKB-KW"/>
</dbReference>
<dbReference type="CDD" id="cd05380">
    <property type="entry name" value="CAP_euk"/>
    <property type="match status" value="1"/>
</dbReference>
<dbReference type="Gene3D" id="3.40.33.10">
    <property type="entry name" value="CAP"/>
    <property type="match status" value="1"/>
</dbReference>
<dbReference type="InterPro" id="IPR014044">
    <property type="entry name" value="CAP_dom"/>
</dbReference>
<dbReference type="InterPro" id="IPR035940">
    <property type="entry name" value="CAP_sf"/>
</dbReference>
<dbReference type="InterPro" id="IPR034763">
    <property type="entry name" value="P14a_insect"/>
</dbReference>
<dbReference type="Pfam" id="PF00188">
    <property type="entry name" value="CAP"/>
    <property type="match status" value="1"/>
</dbReference>
<dbReference type="PIRSF" id="PIRSF038921">
    <property type="entry name" value="P14a"/>
    <property type="match status" value="1"/>
</dbReference>
<dbReference type="SMART" id="SM00198">
    <property type="entry name" value="SCP"/>
    <property type="match status" value="1"/>
</dbReference>
<dbReference type="SUPFAM" id="SSF55797">
    <property type="entry name" value="PR-1-like"/>
    <property type="match status" value="1"/>
</dbReference>
<reference evidence="6" key="1">
    <citation type="journal article" date="2009" name="Mol. Cell. Proteomics">
        <title>Anti-thrombosis repertoire of blood-feeding horsefly salivary glands.</title>
        <authorList>
            <person name="Ma D."/>
            <person name="Wang Y."/>
            <person name="Yang H."/>
            <person name="Wu J."/>
            <person name="An S."/>
            <person name="Gao L."/>
            <person name="Xu X."/>
            <person name="Lai R."/>
        </authorList>
    </citation>
    <scope>NUCLEOTIDE SEQUENCE [MRNA]</scope>
    <scope>PROTEIN SEQUENCE OF 23-50; 122-135; 168-188 AND 204-217</scope>
    <scope>SUBCELLULAR LOCATION</scope>
    <scope>FUNCTION</scope>
    <source>
        <tissue>Salivary gland</tissue>
    </source>
</reference>
<sequence>MLPYWCPLLLAALVLQYATIDAVNYCNLPCRGDRFHVGCGESAFAQECGESPETLDLLKEHTDEILSKINDVRDHVAKGSWGLPMAARMKVVVWDEELARLATRHTKGCLAETHACRNTERFLFPGQLNFEYTDDKLPQTKELIDAAIKKGHLQKHNISREIIESYRDNGPDGNVEELALALSDRVTAVGCGLTTWQDGAKARALLTCNFSSQNTWGRPVYKIGNSPGEKCIEKDETYKNLCSASEPIDPNESN</sequence>
<comment type="function">
    <text evidence="2">Inhibits platelet aggregation induced by all agonists tested (ADP, arachidonic acid, the thromboxane A2 analog U46619, thrombin, and snake venom snaclecs (TMVA that activates platelet through GPIB, and stejnulxin that specifically acts through GPVI (GP6))) (PubMed:19531497). May act by competing with fibrinogen for binding to glycoprotein IIb/IIIa (ITGA2B/ITGB3) (PubMed:19531497).</text>
</comment>
<comment type="subcellular location">
    <subcellularLocation>
        <location evidence="2">Secreted</location>
    </subcellularLocation>
</comment>
<comment type="tissue specificity">
    <text evidence="5">Expressed in salivary glands.</text>
</comment>
<comment type="similarity">
    <text evidence="4">Belongs to the CRISP family.</text>
</comment>
<proteinExistence type="evidence at protein level"/>
<evidence type="ECO:0000255" key="1"/>
<evidence type="ECO:0000269" key="2">
    <source>
    </source>
</evidence>
<evidence type="ECO:0000303" key="3">
    <source>
    </source>
</evidence>
<evidence type="ECO:0000305" key="4"/>
<evidence type="ECO:0000305" key="5">
    <source>
    </source>
</evidence>
<evidence type="ECO:0000312" key="6">
    <source>
        <dbReference type="EMBL" id="ACS72296.1"/>
    </source>
</evidence>
<protein>
    <recommendedName>
        <fullName evidence="3">Tabinhibitin 6</fullName>
    </recommendedName>
</protein>
<name>INH6_TABYA</name>
<feature type="signal peptide" evidence="1 5">
    <location>
        <begin position="1"/>
        <end position="22"/>
    </location>
</feature>
<feature type="chain" id="PRO_5002994255" description="Tabinhibitin 6" evidence="5">
    <location>
        <begin position="23"/>
        <end position="254"/>
    </location>
</feature>
<feature type="domain" description="SCP" evidence="1">
    <location>
        <begin position="66"/>
        <end position="210"/>
    </location>
</feature>
<feature type="short sequence motif" description="Cell attachment site" evidence="5">
    <location>
        <begin position="31"/>
        <end position="33"/>
    </location>
</feature>